<reference key="1">
    <citation type="journal article" date="1995" name="Science">
        <title>Whole-genome random sequencing and assembly of Haemophilus influenzae Rd.</title>
        <authorList>
            <person name="Fleischmann R.D."/>
            <person name="Adams M.D."/>
            <person name="White O."/>
            <person name="Clayton R.A."/>
            <person name="Kirkness E.F."/>
            <person name="Kerlavage A.R."/>
            <person name="Bult C.J."/>
            <person name="Tomb J.-F."/>
            <person name="Dougherty B.A."/>
            <person name="Merrick J.M."/>
            <person name="McKenney K."/>
            <person name="Sutton G.G."/>
            <person name="FitzHugh W."/>
            <person name="Fields C.A."/>
            <person name="Gocayne J.D."/>
            <person name="Scott J.D."/>
            <person name="Shirley R."/>
            <person name="Liu L.-I."/>
            <person name="Glodek A."/>
            <person name="Kelley J.M."/>
            <person name="Weidman J.F."/>
            <person name="Phillips C.A."/>
            <person name="Spriggs T."/>
            <person name="Hedblom E."/>
            <person name="Cotton M.D."/>
            <person name="Utterback T.R."/>
            <person name="Hanna M.C."/>
            <person name="Nguyen D.T."/>
            <person name="Saudek D.M."/>
            <person name="Brandon R.C."/>
            <person name="Fine L.D."/>
            <person name="Fritchman J.L."/>
            <person name="Fuhrmann J.L."/>
            <person name="Geoghagen N.S.M."/>
            <person name="Gnehm C.L."/>
            <person name="McDonald L.A."/>
            <person name="Small K.V."/>
            <person name="Fraser C.M."/>
            <person name="Smith H.O."/>
            <person name="Venter J.C."/>
        </authorList>
    </citation>
    <scope>NUCLEOTIDE SEQUENCE [LARGE SCALE GENOMIC DNA]</scope>
    <source>
        <strain>ATCC 51907 / DSM 11121 / KW20 / Rd</strain>
    </source>
</reference>
<keyword id="KW-0963">Cytoplasm</keyword>
<keyword id="KW-0238">DNA-binding</keyword>
<keyword id="KW-1185">Reference proteome</keyword>
<keyword id="KW-0731">Sigma factor</keyword>
<keyword id="KW-0804">Transcription</keyword>
<keyword id="KW-0805">Transcription regulation</keyword>
<proteinExistence type="inferred from homology"/>
<sequence length="629" mass="72085">MEKNQQSTAEQYSEQIEQLMELGRTQGYLTFAEINDLLPEDAIDPEYYDKLLQTLQNDAGIPVLDEAPESDDMMLSDTIPDEDAVEEATQILSNVESEIGRTTDPVRMYMREMGTVDLLTREDEISIAKRIEGGIDEVQTSISAYPEALNGLLKNYDDVEKGNFRLTDLITGFVDPNAEIEEHNGLDEDFSDEDDEEESSNADVEDNEDEEDNESESTSDSSDSDNSIDPEVAREKFQQLREQHSKTLAVIEKHGRSGKRAQDQIALLGEIFKQFRLVPKQFDLLVLSMKEMMKRVRYQERQLQKILVDIAGMPKDDFEKIITTNGSNSEWVAKALKSSKPWAKRLIKYEDRIYEALNNLAITEENTKLTITQMRDICDAVARGEQKARRAKKEMVEANLRLVISIAKKYTNRGLQFLDLIQEGNIGLMKAVDKFEYRRGYKFSTYATWWIRQAITRSIADQARTIRIPVHMIETINKLNRISRQLLQEMGREATPEELAERMGMPEDKIRKVLKIAKEPISMETPIGDDDDSHLGDFIEDSTLELPLDSATAQSLKVATHEVLEGLTPREAKVLRMRFGIDMNTDHTLEEVGKQFDVTRERIRQIEAKALRKLRHPSRSETLRSFLDE</sequence>
<gene>
    <name evidence="1" type="primary">rpoD</name>
    <name type="ordered locus">HI_0533</name>
</gene>
<name>RPOD_HAEIN</name>
<accession>P43766</accession>
<dbReference type="EMBL" id="L42023">
    <property type="protein sequence ID" value="AAC22190.1"/>
    <property type="molecule type" value="Genomic_DNA"/>
</dbReference>
<dbReference type="PIR" id="B64075">
    <property type="entry name" value="B64075"/>
</dbReference>
<dbReference type="RefSeq" id="NP_438691.1">
    <property type="nucleotide sequence ID" value="NC_000907.1"/>
</dbReference>
<dbReference type="SMR" id="P43766"/>
<dbReference type="STRING" id="71421.HI_0533"/>
<dbReference type="EnsemblBacteria" id="AAC22190">
    <property type="protein sequence ID" value="AAC22190"/>
    <property type="gene ID" value="HI_0533"/>
</dbReference>
<dbReference type="KEGG" id="hin:HI_0533"/>
<dbReference type="PATRIC" id="fig|71421.8.peg.552"/>
<dbReference type="eggNOG" id="COG0568">
    <property type="taxonomic scope" value="Bacteria"/>
</dbReference>
<dbReference type="HOGENOM" id="CLU_014793_7_0_6"/>
<dbReference type="OrthoDB" id="9809557at2"/>
<dbReference type="PhylomeDB" id="P43766"/>
<dbReference type="BioCyc" id="HINF71421:G1GJ1-546-MONOMER"/>
<dbReference type="Proteomes" id="UP000000579">
    <property type="component" value="Chromosome"/>
</dbReference>
<dbReference type="GO" id="GO:0005737">
    <property type="term" value="C:cytoplasm"/>
    <property type="evidence" value="ECO:0007669"/>
    <property type="project" value="UniProtKB-SubCell"/>
</dbReference>
<dbReference type="GO" id="GO:0003677">
    <property type="term" value="F:DNA binding"/>
    <property type="evidence" value="ECO:0007669"/>
    <property type="project" value="UniProtKB-UniRule"/>
</dbReference>
<dbReference type="GO" id="GO:0016987">
    <property type="term" value="F:sigma factor activity"/>
    <property type="evidence" value="ECO:0007669"/>
    <property type="project" value="UniProtKB-UniRule"/>
</dbReference>
<dbReference type="GO" id="GO:0006352">
    <property type="term" value="P:DNA-templated transcription initiation"/>
    <property type="evidence" value="ECO:0007669"/>
    <property type="project" value="UniProtKB-UniRule"/>
</dbReference>
<dbReference type="CDD" id="cd06171">
    <property type="entry name" value="Sigma70_r4"/>
    <property type="match status" value="1"/>
</dbReference>
<dbReference type="FunFam" id="1.10.601.10:FF:000002">
    <property type="entry name" value="RNA polymerase sigma factor RpoD"/>
    <property type="match status" value="1"/>
</dbReference>
<dbReference type="FunFam" id="1.10.10.10:FF:000002">
    <property type="entry name" value="RNA polymerase sigma factor SigA"/>
    <property type="match status" value="1"/>
</dbReference>
<dbReference type="FunFam" id="1.10.10.10:FF:000004">
    <property type="entry name" value="RNA polymerase sigma factor SigA"/>
    <property type="match status" value="1"/>
</dbReference>
<dbReference type="Gene3D" id="1.10.601.10">
    <property type="entry name" value="RNA Polymerase Primary Sigma Factor"/>
    <property type="match status" value="1"/>
</dbReference>
<dbReference type="Gene3D" id="1.10.220.120">
    <property type="entry name" value="Sigma-70 factor, region 1.1"/>
    <property type="match status" value="1"/>
</dbReference>
<dbReference type="Gene3D" id="1.10.10.10">
    <property type="entry name" value="Winged helix-like DNA-binding domain superfamily/Winged helix DNA-binding domain"/>
    <property type="match status" value="2"/>
</dbReference>
<dbReference type="HAMAP" id="MF_00963">
    <property type="entry name" value="Sigma70_RpoD_SigA"/>
    <property type="match status" value="1"/>
</dbReference>
<dbReference type="InterPro" id="IPR014284">
    <property type="entry name" value="RNA_pol_sigma-70_dom"/>
</dbReference>
<dbReference type="InterPro" id="IPR000943">
    <property type="entry name" value="RNA_pol_sigma70"/>
</dbReference>
<dbReference type="InterPro" id="IPR009042">
    <property type="entry name" value="RNA_pol_sigma70_r1_2"/>
</dbReference>
<dbReference type="InterPro" id="IPR007627">
    <property type="entry name" value="RNA_pol_sigma70_r2"/>
</dbReference>
<dbReference type="InterPro" id="IPR007624">
    <property type="entry name" value="RNA_pol_sigma70_r3"/>
</dbReference>
<dbReference type="InterPro" id="IPR007630">
    <property type="entry name" value="RNA_pol_sigma70_r4"/>
</dbReference>
<dbReference type="InterPro" id="IPR007631">
    <property type="entry name" value="RNA_pol_sigma_70_non-ess"/>
</dbReference>
<dbReference type="InterPro" id="IPR007127">
    <property type="entry name" value="RNA_pol_sigma_70_r1_1"/>
</dbReference>
<dbReference type="InterPro" id="IPR042189">
    <property type="entry name" value="RNA_pol_sigma_70_r1_1_sf"/>
</dbReference>
<dbReference type="InterPro" id="IPR013325">
    <property type="entry name" value="RNA_pol_sigma_r2"/>
</dbReference>
<dbReference type="InterPro" id="IPR013324">
    <property type="entry name" value="RNA_pol_sigma_r3/r4-like"/>
</dbReference>
<dbReference type="InterPro" id="IPR012760">
    <property type="entry name" value="RNA_pol_sigma_RpoD_C"/>
</dbReference>
<dbReference type="InterPro" id="IPR050239">
    <property type="entry name" value="Sigma-70_RNA_pol_init_factors"/>
</dbReference>
<dbReference type="InterPro" id="IPR028630">
    <property type="entry name" value="Sigma70_RpoD"/>
</dbReference>
<dbReference type="InterPro" id="IPR036388">
    <property type="entry name" value="WH-like_DNA-bd_sf"/>
</dbReference>
<dbReference type="NCBIfam" id="NF004208">
    <property type="entry name" value="PRK05658.1"/>
    <property type="match status" value="1"/>
</dbReference>
<dbReference type="NCBIfam" id="TIGR02393">
    <property type="entry name" value="RpoD_Cterm"/>
    <property type="match status" value="1"/>
</dbReference>
<dbReference type="NCBIfam" id="TIGR02937">
    <property type="entry name" value="sigma70-ECF"/>
    <property type="match status" value="1"/>
</dbReference>
<dbReference type="PANTHER" id="PTHR30603">
    <property type="entry name" value="RNA POLYMERASE SIGMA FACTOR RPO"/>
    <property type="match status" value="1"/>
</dbReference>
<dbReference type="PANTHER" id="PTHR30603:SF60">
    <property type="entry name" value="RNA POLYMERASE SIGMA FACTOR RPOD"/>
    <property type="match status" value="1"/>
</dbReference>
<dbReference type="Pfam" id="PF04546">
    <property type="entry name" value="Sigma70_ner"/>
    <property type="match status" value="1"/>
</dbReference>
<dbReference type="Pfam" id="PF03979">
    <property type="entry name" value="Sigma70_r1_1"/>
    <property type="match status" value="1"/>
</dbReference>
<dbReference type="Pfam" id="PF00140">
    <property type="entry name" value="Sigma70_r1_2"/>
    <property type="match status" value="1"/>
</dbReference>
<dbReference type="Pfam" id="PF04542">
    <property type="entry name" value="Sigma70_r2"/>
    <property type="match status" value="1"/>
</dbReference>
<dbReference type="Pfam" id="PF04539">
    <property type="entry name" value="Sigma70_r3"/>
    <property type="match status" value="1"/>
</dbReference>
<dbReference type="Pfam" id="PF04545">
    <property type="entry name" value="Sigma70_r4"/>
    <property type="match status" value="1"/>
</dbReference>
<dbReference type="PRINTS" id="PR00046">
    <property type="entry name" value="SIGMA70FCT"/>
</dbReference>
<dbReference type="SUPFAM" id="SSF88946">
    <property type="entry name" value="Sigma2 domain of RNA polymerase sigma factors"/>
    <property type="match status" value="1"/>
</dbReference>
<dbReference type="SUPFAM" id="SSF88659">
    <property type="entry name" value="Sigma3 and sigma4 domains of RNA polymerase sigma factors"/>
    <property type="match status" value="2"/>
</dbReference>
<dbReference type="PROSITE" id="PS00715">
    <property type="entry name" value="SIGMA70_1"/>
    <property type="match status" value="1"/>
</dbReference>
<dbReference type="PROSITE" id="PS00716">
    <property type="entry name" value="SIGMA70_2"/>
    <property type="match status" value="1"/>
</dbReference>
<feature type="chain" id="PRO_0000093889" description="RNA polymerase sigma factor RpoD">
    <location>
        <begin position="1"/>
        <end position="629"/>
    </location>
</feature>
<feature type="DNA-binding region" description="H-T-H motif" evidence="1">
    <location>
        <begin position="589"/>
        <end position="608"/>
    </location>
</feature>
<feature type="region of interest" description="Disordered" evidence="2">
    <location>
        <begin position="183"/>
        <end position="228"/>
    </location>
</feature>
<feature type="region of interest" description="Sigma-70 factor domain-2" evidence="1">
    <location>
        <begin position="395"/>
        <end position="465"/>
    </location>
</feature>
<feature type="region of interest" description="Sigma-70 factor domain-3" evidence="1">
    <location>
        <begin position="474"/>
        <end position="550"/>
    </location>
</feature>
<feature type="region of interest" description="Sigma-70 factor domain-4" evidence="1">
    <location>
        <begin position="563"/>
        <end position="616"/>
    </location>
</feature>
<feature type="short sequence motif" description="Interaction with polymerase core subunit RpoC">
    <location>
        <begin position="419"/>
        <end position="422"/>
    </location>
</feature>
<feature type="compositionally biased region" description="Acidic residues" evidence="2">
    <location>
        <begin position="187"/>
        <end position="228"/>
    </location>
</feature>
<evidence type="ECO:0000255" key="1">
    <source>
        <dbReference type="HAMAP-Rule" id="MF_00963"/>
    </source>
</evidence>
<evidence type="ECO:0000256" key="2">
    <source>
        <dbReference type="SAM" id="MobiDB-lite"/>
    </source>
</evidence>
<organism>
    <name type="scientific">Haemophilus influenzae (strain ATCC 51907 / DSM 11121 / KW20 / Rd)</name>
    <dbReference type="NCBI Taxonomy" id="71421"/>
    <lineage>
        <taxon>Bacteria</taxon>
        <taxon>Pseudomonadati</taxon>
        <taxon>Pseudomonadota</taxon>
        <taxon>Gammaproteobacteria</taxon>
        <taxon>Pasteurellales</taxon>
        <taxon>Pasteurellaceae</taxon>
        <taxon>Haemophilus</taxon>
    </lineage>
</organism>
<comment type="function">
    <text evidence="1">Sigma factors are initiation factors that promote the attachment of RNA polymerase to specific initiation sites and are then released. This sigma factor is the primary sigma factor during exponential growth.</text>
</comment>
<comment type="subunit">
    <text evidence="1">Interacts transiently with the RNA polymerase catalytic core.</text>
</comment>
<comment type="subcellular location">
    <subcellularLocation>
        <location evidence="1">Cytoplasm</location>
    </subcellularLocation>
</comment>
<comment type="similarity">
    <text evidence="1">Belongs to the sigma-70 factor family. RpoD/SigA subfamily.</text>
</comment>
<protein>
    <recommendedName>
        <fullName evidence="1">RNA polymerase sigma factor RpoD</fullName>
    </recommendedName>
    <alternativeName>
        <fullName evidence="1">Sigma-70</fullName>
    </alternativeName>
</protein>